<feature type="chain" id="PRO_1000063134" description="Imidazole glycerol phosphate synthase subunit HisF">
    <location>
        <begin position="1"/>
        <end position="257"/>
    </location>
</feature>
<feature type="active site" evidence="1">
    <location>
        <position position="12"/>
    </location>
</feature>
<feature type="active site" evidence="1">
    <location>
        <position position="131"/>
    </location>
</feature>
<protein>
    <recommendedName>
        <fullName evidence="1">Imidazole glycerol phosphate synthase subunit HisF</fullName>
        <ecNumber evidence="1">4.3.2.10</ecNumber>
    </recommendedName>
    <alternativeName>
        <fullName evidence="1">IGP synthase cyclase subunit</fullName>
    </alternativeName>
    <alternativeName>
        <fullName evidence="1">IGP synthase subunit HisF</fullName>
    </alternativeName>
    <alternativeName>
        <fullName evidence="1">ImGP synthase subunit HisF</fullName>
        <shortName evidence="1">IGPS subunit HisF</shortName>
    </alternativeName>
</protein>
<dbReference type="EC" id="4.3.2.10" evidence="1"/>
<dbReference type="EMBL" id="CP000431">
    <property type="protein sequence ID" value="ABG92849.1"/>
    <property type="molecule type" value="Genomic_DNA"/>
</dbReference>
<dbReference type="RefSeq" id="WP_005247506.1">
    <property type="nucleotide sequence ID" value="NC_008268.1"/>
</dbReference>
<dbReference type="SMR" id="Q0SHY7"/>
<dbReference type="GeneID" id="69892680"/>
<dbReference type="KEGG" id="rha:RHA1_ro01022"/>
<dbReference type="eggNOG" id="COG0107">
    <property type="taxonomic scope" value="Bacteria"/>
</dbReference>
<dbReference type="HOGENOM" id="CLU_048577_4_0_11"/>
<dbReference type="OrthoDB" id="9781903at2"/>
<dbReference type="UniPathway" id="UPA00031">
    <property type="reaction ID" value="UER00010"/>
</dbReference>
<dbReference type="Proteomes" id="UP000008710">
    <property type="component" value="Chromosome"/>
</dbReference>
<dbReference type="GO" id="GO:0005737">
    <property type="term" value="C:cytoplasm"/>
    <property type="evidence" value="ECO:0007669"/>
    <property type="project" value="UniProtKB-SubCell"/>
</dbReference>
<dbReference type="GO" id="GO:0000107">
    <property type="term" value="F:imidazoleglycerol-phosphate synthase activity"/>
    <property type="evidence" value="ECO:0007669"/>
    <property type="project" value="UniProtKB-UniRule"/>
</dbReference>
<dbReference type="GO" id="GO:0016829">
    <property type="term" value="F:lyase activity"/>
    <property type="evidence" value="ECO:0007669"/>
    <property type="project" value="UniProtKB-KW"/>
</dbReference>
<dbReference type="GO" id="GO:0000105">
    <property type="term" value="P:L-histidine biosynthetic process"/>
    <property type="evidence" value="ECO:0007669"/>
    <property type="project" value="UniProtKB-UniRule"/>
</dbReference>
<dbReference type="CDD" id="cd04731">
    <property type="entry name" value="HisF"/>
    <property type="match status" value="1"/>
</dbReference>
<dbReference type="FunFam" id="3.20.20.70:FF:000006">
    <property type="entry name" value="Imidazole glycerol phosphate synthase subunit HisF"/>
    <property type="match status" value="1"/>
</dbReference>
<dbReference type="Gene3D" id="3.20.20.70">
    <property type="entry name" value="Aldolase class I"/>
    <property type="match status" value="1"/>
</dbReference>
<dbReference type="HAMAP" id="MF_01013">
    <property type="entry name" value="HisF"/>
    <property type="match status" value="1"/>
</dbReference>
<dbReference type="InterPro" id="IPR013785">
    <property type="entry name" value="Aldolase_TIM"/>
</dbReference>
<dbReference type="InterPro" id="IPR006062">
    <property type="entry name" value="His_biosynth"/>
</dbReference>
<dbReference type="InterPro" id="IPR004651">
    <property type="entry name" value="HisF"/>
</dbReference>
<dbReference type="InterPro" id="IPR050064">
    <property type="entry name" value="IGPS_HisA/HisF"/>
</dbReference>
<dbReference type="InterPro" id="IPR011060">
    <property type="entry name" value="RibuloseP-bd_barrel"/>
</dbReference>
<dbReference type="NCBIfam" id="TIGR00735">
    <property type="entry name" value="hisF"/>
    <property type="match status" value="1"/>
</dbReference>
<dbReference type="PANTHER" id="PTHR21235:SF2">
    <property type="entry name" value="IMIDAZOLE GLYCEROL PHOSPHATE SYNTHASE HISHF"/>
    <property type="match status" value="1"/>
</dbReference>
<dbReference type="PANTHER" id="PTHR21235">
    <property type="entry name" value="IMIDAZOLE GLYCEROL PHOSPHATE SYNTHASE SUBUNIT HISF/H IGP SYNTHASE SUBUNIT HISF/H"/>
    <property type="match status" value="1"/>
</dbReference>
<dbReference type="Pfam" id="PF00977">
    <property type="entry name" value="His_biosynth"/>
    <property type="match status" value="1"/>
</dbReference>
<dbReference type="SUPFAM" id="SSF51366">
    <property type="entry name" value="Ribulose-phoshate binding barrel"/>
    <property type="match status" value="1"/>
</dbReference>
<gene>
    <name evidence="1" type="primary">hisF</name>
    <name type="ordered locus">RHA1_ro01022</name>
</gene>
<accession>Q0SHY7</accession>
<evidence type="ECO:0000255" key="1">
    <source>
        <dbReference type="HAMAP-Rule" id="MF_01013"/>
    </source>
</evidence>
<organism>
    <name type="scientific">Rhodococcus jostii (strain RHA1)</name>
    <dbReference type="NCBI Taxonomy" id="101510"/>
    <lineage>
        <taxon>Bacteria</taxon>
        <taxon>Bacillati</taxon>
        <taxon>Actinomycetota</taxon>
        <taxon>Actinomycetes</taxon>
        <taxon>Mycobacteriales</taxon>
        <taxon>Nocardiaceae</taxon>
        <taxon>Rhodococcus</taxon>
    </lineage>
</organism>
<name>HIS6_RHOJR</name>
<reference key="1">
    <citation type="journal article" date="2006" name="Proc. Natl. Acad. Sci. U.S.A.">
        <title>The complete genome of Rhodococcus sp. RHA1 provides insights into a catabolic powerhouse.</title>
        <authorList>
            <person name="McLeod M.P."/>
            <person name="Warren R.L."/>
            <person name="Hsiao W.W.L."/>
            <person name="Araki N."/>
            <person name="Myhre M."/>
            <person name="Fernandes C."/>
            <person name="Miyazawa D."/>
            <person name="Wong W."/>
            <person name="Lillquist A.L."/>
            <person name="Wang D."/>
            <person name="Dosanjh M."/>
            <person name="Hara H."/>
            <person name="Petrescu A."/>
            <person name="Morin R.D."/>
            <person name="Yang G."/>
            <person name="Stott J.M."/>
            <person name="Schein J.E."/>
            <person name="Shin H."/>
            <person name="Smailus D."/>
            <person name="Siddiqui A.S."/>
            <person name="Marra M.A."/>
            <person name="Jones S.J.M."/>
            <person name="Holt R."/>
            <person name="Brinkman F.S.L."/>
            <person name="Miyauchi K."/>
            <person name="Fukuda M."/>
            <person name="Davies J.E."/>
            <person name="Mohn W.W."/>
            <person name="Eltis L.D."/>
        </authorList>
    </citation>
    <scope>NUCLEOTIDE SEQUENCE [LARGE SCALE GENOMIC DNA]</scope>
    <source>
        <strain>RHA1</strain>
    </source>
</reference>
<keyword id="KW-0028">Amino-acid biosynthesis</keyword>
<keyword id="KW-0963">Cytoplasm</keyword>
<keyword id="KW-0368">Histidine biosynthesis</keyword>
<keyword id="KW-0456">Lyase</keyword>
<sequence length="257" mass="26746">MTLAVRVIPCLDVDAGRVVKGVNFENLRDAGDPVELAAAYDAQGADELTFLDVTASTADRGTMLDVVSRTAEQVFIPLTVGGGVRTVEDVDRLLRAGADKVSVNTAAIARPELLRELSERFGSQCIVLSVDARTVPQGQPDTPSGWEVTTHGGKRGTGIDAVEWAVRGAELGVGEILLNSMDADGTKAGFDLPMIRAVRAAVHVPVIASGGAGAVEHFAPAVGAGADAVLAASVFHFGDMTIGDVKKSMREEGITVR</sequence>
<comment type="function">
    <text evidence="1">IGPS catalyzes the conversion of PRFAR and glutamine to IGP, AICAR and glutamate. The HisF subunit catalyzes the cyclization activity that produces IGP and AICAR from PRFAR using the ammonia provided by the HisH subunit.</text>
</comment>
<comment type="catalytic activity">
    <reaction evidence="1">
        <text>5-[(5-phospho-1-deoxy-D-ribulos-1-ylimino)methylamino]-1-(5-phospho-beta-D-ribosyl)imidazole-4-carboxamide + L-glutamine = D-erythro-1-(imidazol-4-yl)glycerol 3-phosphate + 5-amino-1-(5-phospho-beta-D-ribosyl)imidazole-4-carboxamide + L-glutamate + H(+)</text>
        <dbReference type="Rhea" id="RHEA:24793"/>
        <dbReference type="ChEBI" id="CHEBI:15378"/>
        <dbReference type="ChEBI" id="CHEBI:29985"/>
        <dbReference type="ChEBI" id="CHEBI:58278"/>
        <dbReference type="ChEBI" id="CHEBI:58359"/>
        <dbReference type="ChEBI" id="CHEBI:58475"/>
        <dbReference type="ChEBI" id="CHEBI:58525"/>
        <dbReference type="EC" id="4.3.2.10"/>
    </reaction>
</comment>
<comment type="pathway">
    <text evidence="1">Amino-acid biosynthesis; L-histidine biosynthesis; L-histidine from 5-phospho-alpha-D-ribose 1-diphosphate: step 5/9.</text>
</comment>
<comment type="subunit">
    <text evidence="1">Heterodimer of HisH and HisF.</text>
</comment>
<comment type="subcellular location">
    <subcellularLocation>
        <location evidence="1">Cytoplasm</location>
    </subcellularLocation>
</comment>
<comment type="similarity">
    <text evidence="1">Belongs to the HisA/HisF family.</text>
</comment>
<proteinExistence type="inferred from homology"/>